<sequence>MKEKWLMALASEWDDVKPLITTALESGFDCVVVSRDHIELVRELGSIRIACFGRERGSEDLLIMDTSVPRENQIKSVEKIGRPIGGYVEIRSKEDELFATELGKHVDYLLVVGTDWKVIPLENMIAALQGYDCKIISCVRSSEEAEVALSTLEHGADGVLLDTRDPSEIKRVQAAAERLGMSRIDLKTATVVAVKPVGMGDRVCVDTCSLMRRGEGMLVGSQSRAFFLVQSEAEESPYVAARPFRVNAGAVHAYIRVGDKTRYLSELKSGDEVTIVDKDGMTRSAVVGRVKIERRPMILVEAEVDGERVSTLLQNAETIKLVSHDGTPISVAELKPGDKVLVHVETSARHFGMSIEETIIER</sequence>
<protein>
    <recommendedName>
        <fullName evidence="1">3-dehydroquinate synthase</fullName>
        <shortName evidence="1">DHQ synthase</shortName>
        <ecNumber evidence="1">1.4.1.24</ecNumber>
    </recommendedName>
    <alternativeName>
        <fullName evidence="1">3-dehydroquinate synthase II</fullName>
    </alternativeName>
</protein>
<gene>
    <name evidence="1" type="primary">aroB'</name>
    <name type="ordered locus">Mthe_0539</name>
</gene>
<name>DHQS_METTP</name>
<organism>
    <name type="scientific">Methanothrix thermoacetophila (strain DSM 6194 / JCM 14653 / NBRC 101360 / PT)</name>
    <name type="common">Methanosaeta thermophila</name>
    <dbReference type="NCBI Taxonomy" id="349307"/>
    <lineage>
        <taxon>Archaea</taxon>
        <taxon>Methanobacteriati</taxon>
        <taxon>Methanobacteriota</taxon>
        <taxon>Stenosarchaea group</taxon>
        <taxon>Methanomicrobia</taxon>
        <taxon>Methanotrichales</taxon>
        <taxon>Methanotrichaceae</taxon>
        <taxon>Methanothrix</taxon>
    </lineage>
</organism>
<keyword id="KW-0028">Amino-acid biosynthesis</keyword>
<keyword id="KW-0057">Aromatic amino acid biosynthesis</keyword>
<keyword id="KW-0520">NAD</keyword>
<keyword id="KW-0560">Oxidoreductase</keyword>
<keyword id="KW-1185">Reference proteome</keyword>
<comment type="function">
    <text evidence="1">Catalyzes the oxidative deamination and cyclization of 2-amino-3,7-dideoxy-D-threo-hept-6-ulosonic acid (ADH) to yield 3-dehydroquinate (DHQ), which is fed into the canonical shikimic pathway of aromatic amino acid biosynthesis.</text>
</comment>
<comment type="catalytic activity">
    <reaction evidence="1">
        <text>2-amino-2,3,7-trideoxy-D-lyxo-hept-6-ulosonate + NAD(+) + H2O = 3-dehydroquinate + NH4(+) + NADH + H(+)</text>
        <dbReference type="Rhea" id="RHEA:25956"/>
        <dbReference type="ChEBI" id="CHEBI:15377"/>
        <dbReference type="ChEBI" id="CHEBI:15378"/>
        <dbReference type="ChEBI" id="CHEBI:28938"/>
        <dbReference type="ChEBI" id="CHEBI:32364"/>
        <dbReference type="ChEBI" id="CHEBI:57540"/>
        <dbReference type="ChEBI" id="CHEBI:57945"/>
        <dbReference type="ChEBI" id="CHEBI:58859"/>
        <dbReference type="EC" id="1.4.1.24"/>
    </reaction>
</comment>
<comment type="similarity">
    <text evidence="1">Belongs to the archaeal-type DHQ synthase family.</text>
</comment>
<comment type="sequence caution" evidence="2">
    <conflict type="erroneous initiation">
        <sequence resource="EMBL-CDS" id="ABK14330"/>
    </conflict>
</comment>
<proteinExistence type="inferred from homology"/>
<evidence type="ECO:0000255" key="1">
    <source>
        <dbReference type="HAMAP-Rule" id="MF_01244"/>
    </source>
</evidence>
<evidence type="ECO:0000305" key="2"/>
<accession>A0B6K6</accession>
<reference key="1">
    <citation type="submission" date="2006-10" db="EMBL/GenBank/DDBJ databases">
        <title>Complete sequence of Methanosaeta thermophila PT.</title>
        <authorList>
            <consortium name="US DOE Joint Genome Institute"/>
            <person name="Copeland A."/>
            <person name="Lucas S."/>
            <person name="Lapidus A."/>
            <person name="Barry K."/>
            <person name="Detter J.C."/>
            <person name="Glavina del Rio T."/>
            <person name="Hammon N."/>
            <person name="Israni S."/>
            <person name="Pitluck S."/>
            <person name="Chain P."/>
            <person name="Malfatti S."/>
            <person name="Shin M."/>
            <person name="Vergez L."/>
            <person name="Schmutz J."/>
            <person name="Larimer F."/>
            <person name="Land M."/>
            <person name="Hauser L."/>
            <person name="Kyrpides N."/>
            <person name="Kim E."/>
            <person name="Smith K.S."/>
            <person name="Ingram-Smith C."/>
            <person name="Richardson P."/>
        </authorList>
    </citation>
    <scope>NUCLEOTIDE SEQUENCE [LARGE SCALE GENOMIC DNA]</scope>
    <source>
        <strain>DSM 6194 / JCM 14653 / NBRC 101360 / PT</strain>
    </source>
</reference>
<feature type="chain" id="PRO_0000372053" description="3-dehydroquinate synthase">
    <location>
        <begin position="1"/>
        <end position="362"/>
    </location>
</feature>
<dbReference type="EC" id="1.4.1.24" evidence="1"/>
<dbReference type="EMBL" id="CP000477">
    <property type="protein sequence ID" value="ABK14330.1"/>
    <property type="status" value="ALT_INIT"/>
    <property type="molecule type" value="Genomic_DNA"/>
</dbReference>
<dbReference type="RefSeq" id="WP_175265716.1">
    <property type="nucleotide sequence ID" value="NC_008553.1"/>
</dbReference>
<dbReference type="STRING" id="349307.Mthe_0539"/>
<dbReference type="GeneID" id="4462731"/>
<dbReference type="KEGG" id="mtp:Mthe_0539"/>
<dbReference type="HOGENOM" id="CLU_056379_0_0_2"/>
<dbReference type="OrthoDB" id="10265at2157"/>
<dbReference type="Proteomes" id="UP000000674">
    <property type="component" value="Chromosome"/>
</dbReference>
<dbReference type="GO" id="GO:0003856">
    <property type="term" value="F:3-dehydroquinate synthase activity"/>
    <property type="evidence" value="ECO:0007669"/>
    <property type="project" value="InterPro"/>
</dbReference>
<dbReference type="GO" id="GO:0102042">
    <property type="term" value="F:dehydroquinate synthase activity"/>
    <property type="evidence" value="ECO:0007669"/>
    <property type="project" value="UniProtKB-EC"/>
</dbReference>
<dbReference type="GO" id="GO:0051287">
    <property type="term" value="F:NAD binding"/>
    <property type="evidence" value="ECO:0007669"/>
    <property type="project" value="UniProtKB-UniRule"/>
</dbReference>
<dbReference type="GO" id="GO:0008652">
    <property type="term" value="P:amino acid biosynthetic process"/>
    <property type="evidence" value="ECO:0007669"/>
    <property type="project" value="UniProtKB-KW"/>
</dbReference>
<dbReference type="GO" id="GO:0009073">
    <property type="term" value="P:aromatic amino acid family biosynthetic process"/>
    <property type="evidence" value="ECO:0007669"/>
    <property type="project" value="UniProtKB-UniRule"/>
</dbReference>
<dbReference type="HAMAP" id="MF_01244">
    <property type="entry name" value="Arch_DHQ_synthase"/>
    <property type="match status" value="1"/>
</dbReference>
<dbReference type="InterPro" id="IPR002812">
    <property type="entry name" value="DHQ_synth"/>
</dbReference>
<dbReference type="NCBIfam" id="NF002626">
    <property type="entry name" value="PRK02290.1-4"/>
    <property type="match status" value="1"/>
</dbReference>
<dbReference type="NCBIfam" id="NF002627">
    <property type="entry name" value="PRK02290.1-5"/>
    <property type="match status" value="1"/>
</dbReference>
<dbReference type="PANTHER" id="PTHR33563">
    <property type="match status" value="1"/>
</dbReference>
<dbReference type="PANTHER" id="PTHR33563:SF1">
    <property type="entry name" value="3-DEHYDROQUINATE SYNTHASE"/>
    <property type="match status" value="1"/>
</dbReference>
<dbReference type="Pfam" id="PF01959">
    <property type="entry name" value="DHQS"/>
    <property type="match status" value="1"/>
</dbReference>
<dbReference type="PIRSF" id="PIRSF006655">
    <property type="entry name" value="DHQ_synth"/>
    <property type="match status" value="1"/>
</dbReference>